<feature type="chain" id="PRO_1000083963" description="Vitamin B12 import ATP-binding protein BtuD">
    <location>
        <begin position="1"/>
        <end position="249"/>
    </location>
</feature>
<feature type="domain" description="ABC transporter" evidence="1">
    <location>
        <begin position="1"/>
        <end position="233"/>
    </location>
</feature>
<feature type="binding site" evidence="1">
    <location>
        <begin position="33"/>
        <end position="40"/>
    </location>
    <ligand>
        <name>ATP</name>
        <dbReference type="ChEBI" id="CHEBI:30616"/>
    </ligand>
</feature>
<keyword id="KW-0067">ATP-binding</keyword>
<keyword id="KW-0997">Cell inner membrane</keyword>
<keyword id="KW-1003">Cell membrane</keyword>
<keyword id="KW-0472">Membrane</keyword>
<keyword id="KW-0547">Nucleotide-binding</keyword>
<keyword id="KW-1278">Translocase</keyword>
<keyword id="KW-0813">Transport</keyword>
<reference key="1">
    <citation type="submission" date="2008-02" db="EMBL/GenBank/DDBJ databases">
        <title>Complete sequence of Escherichia coli C str. ATCC 8739.</title>
        <authorList>
            <person name="Copeland A."/>
            <person name="Lucas S."/>
            <person name="Lapidus A."/>
            <person name="Glavina del Rio T."/>
            <person name="Dalin E."/>
            <person name="Tice H."/>
            <person name="Bruce D."/>
            <person name="Goodwin L."/>
            <person name="Pitluck S."/>
            <person name="Kiss H."/>
            <person name="Brettin T."/>
            <person name="Detter J.C."/>
            <person name="Han C."/>
            <person name="Kuske C.R."/>
            <person name="Schmutz J."/>
            <person name="Larimer F."/>
            <person name="Land M."/>
            <person name="Hauser L."/>
            <person name="Kyrpides N."/>
            <person name="Mikhailova N."/>
            <person name="Ingram L."/>
            <person name="Richardson P."/>
        </authorList>
    </citation>
    <scope>NUCLEOTIDE SEQUENCE [LARGE SCALE GENOMIC DNA]</scope>
    <source>
        <strain>ATCC 8739 / DSM 1576 / NBRC 3972 / NCIMB 8545 / WDCM 00012 / Crooks</strain>
    </source>
</reference>
<organism>
    <name type="scientific">Escherichia coli (strain ATCC 8739 / DSM 1576 / NBRC 3972 / NCIMB 8545 / WDCM 00012 / Crooks)</name>
    <dbReference type="NCBI Taxonomy" id="481805"/>
    <lineage>
        <taxon>Bacteria</taxon>
        <taxon>Pseudomonadati</taxon>
        <taxon>Pseudomonadota</taxon>
        <taxon>Gammaproteobacteria</taxon>
        <taxon>Enterobacterales</taxon>
        <taxon>Enterobacteriaceae</taxon>
        <taxon>Escherichia</taxon>
    </lineage>
</organism>
<protein>
    <recommendedName>
        <fullName evidence="1">Vitamin B12 import ATP-binding protein BtuD</fullName>
        <ecNumber evidence="1">7.6.2.8</ecNumber>
    </recommendedName>
    <alternativeName>
        <fullName evidence="1">Vitamin B12-transporting ATPase</fullName>
    </alternativeName>
</protein>
<sequence>MSIVMQLQDVAESTRLGPLSGEVRAGEILHLVGPNGAGKSTLLARMAGMTSGKGSIQFAGQPLEAWSATKLALHRAYLSQQQTPPFAMPVWHYLTLHQHDKTRTELLNDVAGALALDDKLGRSTNQLSGGEWQRVRLAAVVLQITPQANPAGQLLLLDEPMNSLDVAQQSALDKILSALCQQGLAIVMSSHDLNHTLRHAHRAWLLKGGKMLASGRREEVLTPPNLAQAYGMNFRRLDIEGHRMLISTI</sequence>
<accession>B1IPL8</accession>
<name>BTUD_ECOLC</name>
<proteinExistence type="inferred from homology"/>
<evidence type="ECO:0000255" key="1">
    <source>
        <dbReference type="HAMAP-Rule" id="MF_01005"/>
    </source>
</evidence>
<gene>
    <name evidence="1" type="primary">btuD</name>
    <name type="ordered locus">EcolC_1922</name>
</gene>
<comment type="function">
    <text evidence="1">Part of the ABC transporter complex BtuCDF involved in vitamin B12 import. Responsible for energy coupling to the transport system.</text>
</comment>
<comment type="catalytic activity">
    <reaction evidence="1">
        <text>an R-cob(III)alamin(out) + ATP + H2O = an R-cob(III)alamin(in) + ADP + phosphate + H(+)</text>
        <dbReference type="Rhea" id="RHEA:17873"/>
        <dbReference type="ChEBI" id="CHEBI:15377"/>
        <dbReference type="ChEBI" id="CHEBI:15378"/>
        <dbReference type="ChEBI" id="CHEBI:30616"/>
        <dbReference type="ChEBI" id="CHEBI:43474"/>
        <dbReference type="ChEBI" id="CHEBI:140785"/>
        <dbReference type="ChEBI" id="CHEBI:456216"/>
        <dbReference type="EC" id="7.6.2.8"/>
    </reaction>
</comment>
<comment type="subunit">
    <text evidence="1">The complex is composed of two ATP-binding proteins (BtuD), two transmembrane proteins (BtuC) and a solute-binding protein (BtuF).</text>
</comment>
<comment type="subcellular location">
    <subcellularLocation>
        <location evidence="1">Cell inner membrane</location>
        <topology evidence="1">Peripheral membrane protein</topology>
    </subcellularLocation>
</comment>
<comment type="similarity">
    <text evidence="1">Belongs to the ABC transporter superfamily. Vitamin B12 importer (TC 3.A.1.13.1) family.</text>
</comment>
<dbReference type="EC" id="7.6.2.8" evidence="1"/>
<dbReference type="EMBL" id="CP000946">
    <property type="protein sequence ID" value="ACA77568.1"/>
    <property type="molecule type" value="Genomic_DNA"/>
</dbReference>
<dbReference type="RefSeq" id="WP_000029466.1">
    <property type="nucleotide sequence ID" value="NZ_MTFT01000006.1"/>
</dbReference>
<dbReference type="SMR" id="B1IPL8"/>
<dbReference type="GeneID" id="93775873"/>
<dbReference type="KEGG" id="ecl:EcolC_1922"/>
<dbReference type="HOGENOM" id="CLU_000604_1_11_6"/>
<dbReference type="GO" id="GO:0005886">
    <property type="term" value="C:plasma membrane"/>
    <property type="evidence" value="ECO:0007669"/>
    <property type="project" value="UniProtKB-SubCell"/>
</dbReference>
<dbReference type="GO" id="GO:0015420">
    <property type="term" value="F:ABC-type vitamin B12 transporter activity"/>
    <property type="evidence" value="ECO:0007669"/>
    <property type="project" value="UniProtKB-UniRule"/>
</dbReference>
<dbReference type="GO" id="GO:0005524">
    <property type="term" value="F:ATP binding"/>
    <property type="evidence" value="ECO:0007669"/>
    <property type="project" value="UniProtKB-KW"/>
</dbReference>
<dbReference type="GO" id="GO:0016887">
    <property type="term" value="F:ATP hydrolysis activity"/>
    <property type="evidence" value="ECO:0007669"/>
    <property type="project" value="InterPro"/>
</dbReference>
<dbReference type="CDD" id="cd03214">
    <property type="entry name" value="ABC_Iron-Siderophores_B12_Hemin"/>
    <property type="match status" value="1"/>
</dbReference>
<dbReference type="FunFam" id="3.40.50.300:FF:000462">
    <property type="entry name" value="Vitamin B12 import ATP-binding protein BtuD"/>
    <property type="match status" value="1"/>
</dbReference>
<dbReference type="Gene3D" id="3.40.50.300">
    <property type="entry name" value="P-loop containing nucleotide triphosphate hydrolases"/>
    <property type="match status" value="1"/>
</dbReference>
<dbReference type="HAMAP" id="MF_01005">
    <property type="entry name" value="BtuD"/>
    <property type="match status" value="1"/>
</dbReference>
<dbReference type="InterPro" id="IPR003593">
    <property type="entry name" value="AAA+_ATPase"/>
</dbReference>
<dbReference type="InterPro" id="IPR003439">
    <property type="entry name" value="ABC_transporter-like_ATP-bd"/>
</dbReference>
<dbReference type="InterPro" id="IPR017871">
    <property type="entry name" value="ABC_transporter-like_CS"/>
</dbReference>
<dbReference type="InterPro" id="IPR023693">
    <property type="entry name" value="ABC_transptr_BtuD"/>
</dbReference>
<dbReference type="InterPro" id="IPR050153">
    <property type="entry name" value="Metal_Ion_Import_ABC"/>
</dbReference>
<dbReference type="InterPro" id="IPR027417">
    <property type="entry name" value="P-loop_NTPase"/>
</dbReference>
<dbReference type="NCBIfam" id="NF002981">
    <property type="entry name" value="PRK03695.1"/>
    <property type="match status" value="1"/>
</dbReference>
<dbReference type="PANTHER" id="PTHR42734">
    <property type="entry name" value="METAL TRANSPORT SYSTEM ATP-BINDING PROTEIN TM_0124-RELATED"/>
    <property type="match status" value="1"/>
</dbReference>
<dbReference type="PANTHER" id="PTHR42734:SF18">
    <property type="entry name" value="VITAMIN B12 IMPORT ATP-BINDING PROTEIN BTUD"/>
    <property type="match status" value="1"/>
</dbReference>
<dbReference type="Pfam" id="PF00005">
    <property type="entry name" value="ABC_tran"/>
    <property type="match status" value="1"/>
</dbReference>
<dbReference type="SMART" id="SM00382">
    <property type="entry name" value="AAA"/>
    <property type="match status" value="1"/>
</dbReference>
<dbReference type="SUPFAM" id="SSF52540">
    <property type="entry name" value="P-loop containing nucleoside triphosphate hydrolases"/>
    <property type="match status" value="1"/>
</dbReference>
<dbReference type="PROSITE" id="PS00211">
    <property type="entry name" value="ABC_TRANSPORTER_1"/>
    <property type="match status" value="1"/>
</dbReference>
<dbReference type="PROSITE" id="PS50893">
    <property type="entry name" value="ABC_TRANSPORTER_2"/>
    <property type="match status" value="1"/>
</dbReference>